<organism>
    <name type="scientific">Shigella boydii serotype 4 (strain Sb227)</name>
    <dbReference type="NCBI Taxonomy" id="300268"/>
    <lineage>
        <taxon>Bacteria</taxon>
        <taxon>Pseudomonadati</taxon>
        <taxon>Pseudomonadota</taxon>
        <taxon>Gammaproteobacteria</taxon>
        <taxon>Enterobacterales</taxon>
        <taxon>Enterobacteriaceae</taxon>
        <taxon>Shigella</taxon>
    </lineage>
</organism>
<feature type="chain" id="PRO_0000234923" description="Beta-hexosaminidase">
    <location>
        <begin position="1"/>
        <end position="341"/>
    </location>
</feature>
<feature type="active site" description="Proton donor/acceptor" evidence="1">
    <location>
        <position position="176"/>
    </location>
</feature>
<feature type="active site" description="Nucleophile" evidence="1">
    <location>
        <position position="248"/>
    </location>
</feature>
<feature type="binding site" evidence="1">
    <location>
        <position position="62"/>
    </location>
    <ligand>
        <name>substrate</name>
    </ligand>
</feature>
<feature type="binding site" evidence="1">
    <location>
        <position position="70"/>
    </location>
    <ligand>
        <name>substrate</name>
    </ligand>
</feature>
<feature type="binding site" evidence="1">
    <location>
        <position position="133"/>
    </location>
    <ligand>
        <name>substrate</name>
    </ligand>
</feature>
<feature type="binding site" evidence="1">
    <location>
        <begin position="163"/>
        <end position="164"/>
    </location>
    <ligand>
        <name>substrate</name>
    </ligand>
</feature>
<feature type="site" description="Important for catalytic activity" evidence="1">
    <location>
        <position position="174"/>
    </location>
</feature>
<sequence length="341" mass="37627">MGPVMLDVEGYELDAEEREILAHPLVGGLILFTRNYHDPAQLRELVRQIRAASRNHLVVAVDQEGGRVQRFREGFTRLPAAQSFAALLGMEEGGKLAQEAGWLMASEMIAMDIDISFAPVLDVGHISAAIGERSYHADPEKALAIASRFIDGMHEAGMKTTGKHFPGHGAVTADSHKETPCDPRPQAEIRAKDMSVFSTLIRENKLDAIMPAHVIYSDVDPRPASGSSYWLKTVLRQELCFDGVIFSDDLSMEGAAIMGSYAERGQASLDAGCDMILVCNNRKGAVSVLDNLSPIKAERVTRLYHKGSFSRQELMDSARWKASSTRLNQLHERWQEEKAGH</sequence>
<proteinExistence type="inferred from homology"/>
<evidence type="ECO:0000255" key="1">
    <source>
        <dbReference type="HAMAP-Rule" id="MF_00364"/>
    </source>
</evidence>
<accession>Q31ZG4</accession>
<name>NAGZ_SHIBS</name>
<reference key="1">
    <citation type="journal article" date="2005" name="Nucleic Acids Res.">
        <title>Genome dynamics and diversity of Shigella species, the etiologic agents of bacillary dysentery.</title>
        <authorList>
            <person name="Yang F."/>
            <person name="Yang J."/>
            <person name="Zhang X."/>
            <person name="Chen L."/>
            <person name="Jiang Y."/>
            <person name="Yan Y."/>
            <person name="Tang X."/>
            <person name="Wang J."/>
            <person name="Xiong Z."/>
            <person name="Dong J."/>
            <person name="Xue Y."/>
            <person name="Zhu Y."/>
            <person name="Xu X."/>
            <person name="Sun L."/>
            <person name="Chen S."/>
            <person name="Nie H."/>
            <person name="Peng J."/>
            <person name="Xu J."/>
            <person name="Wang Y."/>
            <person name="Yuan Z."/>
            <person name="Wen Y."/>
            <person name="Yao Z."/>
            <person name="Shen Y."/>
            <person name="Qiang B."/>
            <person name="Hou Y."/>
            <person name="Yu J."/>
            <person name="Jin Q."/>
        </authorList>
    </citation>
    <scope>NUCLEOTIDE SEQUENCE [LARGE SCALE GENOMIC DNA]</scope>
    <source>
        <strain>Sb227</strain>
    </source>
</reference>
<keyword id="KW-0131">Cell cycle</keyword>
<keyword id="KW-0132">Cell division</keyword>
<keyword id="KW-0133">Cell shape</keyword>
<keyword id="KW-0961">Cell wall biogenesis/degradation</keyword>
<keyword id="KW-0963">Cytoplasm</keyword>
<keyword id="KW-0326">Glycosidase</keyword>
<keyword id="KW-0378">Hydrolase</keyword>
<keyword id="KW-0573">Peptidoglycan synthesis</keyword>
<comment type="function">
    <text evidence="1">Plays a role in peptidoglycan recycling by cleaving the terminal beta-1,4-linked N-acetylglucosamine (GlcNAc) from peptide-linked peptidoglycan fragments, giving rise to free GlcNAc, anhydro-N-acetylmuramic acid and anhydro-N-acetylmuramic acid-linked peptides.</text>
</comment>
<comment type="catalytic activity">
    <reaction evidence="1">
        <text>Hydrolysis of terminal non-reducing N-acetyl-D-hexosamine residues in N-acetyl-beta-D-hexosaminides.</text>
        <dbReference type="EC" id="3.2.1.52"/>
    </reaction>
</comment>
<comment type="pathway">
    <text evidence="1">Cell wall biogenesis; peptidoglycan recycling.</text>
</comment>
<comment type="subcellular location">
    <subcellularLocation>
        <location evidence="1">Cytoplasm</location>
    </subcellularLocation>
</comment>
<comment type="similarity">
    <text evidence="1">Belongs to the glycosyl hydrolase 3 family. NagZ subfamily.</text>
</comment>
<gene>
    <name evidence="1" type="primary">nagZ</name>
    <name type="ordered locus">SBO_1954</name>
</gene>
<protein>
    <recommendedName>
        <fullName evidence="1">Beta-hexosaminidase</fullName>
        <ecNumber evidence="1">3.2.1.52</ecNumber>
    </recommendedName>
    <alternativeName>
        <fullName evidence="1">Beta-N-acetylhexosaminidase</fullName>
    </alternativeName>
    <alternativeName>
        <fullName evidence="1">N-acetyl-beta-glucosaminidase</fullName>
    </alternativeName>
</protein>
<dbReference type="EC" id="3.2.1.52" evidence="1"/>
<dbReference type="EMBL" id="CP000036">
    <property type="protein sequence ID" value="ABB66544.1"/>
    <property type="molecule type" value="Genomic_DNA"/>
</dbReference>
<dbReference type="RefSeq" id="WP_000529288.1">
    <property type="nucleotide sequence ID" value="NC_007613.1"/>
</dbReference>
<dbReference type="SMR" id="Q31ZG4"/>
<dbReference type="CAZy" id="GH3">
    <property type="family name" value="Glycoside Hydrolase Family 3"/>
</dbReference>
<dbReference type="KEGG" id="sbo:SBO_1954"/>
<dbReference type="HOGENOM" id="CLU_008392_0_0_6"/>
<dbReference type="UniPathway" id="UPA00544"/>
<dbReference type="Proteomes" id="UP000007067">
    <property type="component" value="Chromosome"/>
</dbReference>
<dbReference type="GO" id="GO:0005737">
    <property type="term" value="C:cytoplasm"/>
    <property type="evidence" value="ECO:0007669"/>
    <property type="project" value="UniProtKB-SubCell"/>
</dbReference>
<dbReference type="GO" id="GO:0004563">
    <property type="term" value="F:beta-N-acetylhexosaminidase activity"/>
    <property type="evidence" value="ECO:0007669"/>
    <property type="project" value="UniProtKB-UniRule"/>
</dbReference>
<dbReference type="GO" id="GO:0005975">
    <property type="term" value="P:carbohydrate metabolic process"/>
    <property type="evidence" value="ECO:0007669"/>
    <property type="project" value="InterPro"/>
</dbReference>
<dbReference type="GO" id="GO:0051301">
    <property type="term" value="P:cell division"/>
    <property type="evidence" value="ECO:0007669"/>
    <property type="project" value="UniProtKB-KW"/>
</dbReference>
<dbReference type="GO" id="GO:0071555">
    <property type="term" value="P:cell wall organization"/>
    <property type="evidence" value="ECO:0007669"/>
    <property type="project" value="UniProtKB-KW"/>
</dbReference>
<dbReference type="GO" id="GO:0009252">
    <property type="term" value="P:peptidoglycan biosynthetic process"/>
    <property type="evidence" value="ECO:0007669"/>
    <property type="project" value="UniProtKB-KW"/>
</dbReference>
<dbReference type="GO" id="GO:0009254">
    <property type="term" value="P:peptidoglycan turnover"/>
    <property type="evidence" value="ECO:0007669"/>
    <property type="project" value="UniProtKB-UniRule"/>
</dbReference>
<dbReference type="GO" id="GO:0008360">
    <property type="term" value="P:regulation of cell shape"/>
    <property type="evidence" value="ECO:0007669"/>
    <property type="project" value="UniProtKB-KW"/>
</dbReference>
<dbReference type="FunFam" id="3.20.20.300:FF:000001">
    <property type="entry name" value="Beta-hexosaminidase"/>
    <property type="match status" value="1"/>
</dbReference>
<dbReference type="Gene3D" id="3.20.20.300">
    <property type="entry name" value="Glycoside hydrolase, family 3, N-terminal domain"/>
    <property type="match status" value="1"/>
</dbReference>
<dbReference type="HAMAP" id="MF_00364">
    <property type="entry name" value="NagZ"/>
    <property type="match status" value="1"/>
</dbReference>
<dbReference type="InterPro" id="IPR022956">
    <property type="entry name" value="Beta_hexosaminidase_bac"/>
</dbReference>
<dbReference type="InterPro" id="IPR019800">
    <property type="entry name" value="Glyco_hydro_3_AS"/>
</dbReference>
<dbReference type="InterPro" id="IPR001764">
    <property type="entry name" value="Glyco_hydro_3_N"/>
</dbReference>
<dbReference type="InterPro" id="IPR036962">
    <property type="entry name" value="Glyco_hydro_3_N_sf"/>
</dbReference>
<dbReference type="InterPro" id="IPR017853">
    <property type="entry name" value="Glycoside_hydrolase_SF"/>
</dbReference>
<dbReference type="InterPro" id="IPR050226">
    <property type="entry name" value="NagZ_Beta-hexosaminidase"/>
</dbReference>
<dbReference type="NCBIfam" id="NF003740">
    <property type="entry name" value="PRK05337.1"/>
    <property type="match status" value="1"/>
</dbReference>
<dbReference type="PANTHER" id="PTHR30480:SF13">
    <property type="entry name" value="BETA-HEXOSAMINIDASE"/>
    <property type="match status" value="1"/>
</dbReference>
<dbReference type="PANTHER" id="PTHR30480">
    <property type="entry name" value="BETA-HEXOSAMINIDASE-RELATED"/>
    <property type="match status" value="1"/>
</dbReference>
<dbReference type="Pfam" id="PF00933">
    <property type="entry name" value="Glyco_hydro_3"/>
    <property type="match status" value="1"/>
</dbReference>
<dbReference type="SUPFAM" id="SSF51445">
    <property type="entry name" value="(Trans)glycosidases"/>
    <property type="match status" value="1"/>
</dbReference>
<dbReference type="PROSITE" id="PS00775">
    <property type="entry name" value="GLYCOSYL_HYDROL_F3"/>
    <property type="match status" value="1"/>
</dbReference>